<evidence type="ECO:0000255" key="1">
    <source>
        <dbReference type="HAMAP-Rule" id="MF_01358"/>
    </source>
</evidence>
<gene>
    <name evidence="1" type="primary">nuoD2</name>
    <name type="ordered locus">CHU_1379</name>
</gene>
<feature type="chain" id="PRO_0000357803" description="NADH-quinone oxidoreductase subunit D 2">
    <location>
        <begin position="1"/>
        <end position="393"/>
    </location>
</feature>
<dbReference type="EC" id="7.1.1.-" evidence="1"/>
<dbReference type="EMBL" id="CP000383">
    <property type="protein sequence ID" value="ABG58651.1"/>
    <property type="molecule type" value="Genomic_DNA"/>
</dbReference>
<dbReference type="SMR" id="Q11VB5"/>
<dbReference type="STRING" id="269798.CHU_1379"/>
<dbReference type="KEGG" id="chu:CHU_1379"/>
<dbReference type="eggNOG" id="COG0649">
    <property type="taxonomic scope" value="Bacteria"/>
</dbReference>
<dbReference type="HOGENOM" id="CLU_015134_1_2_10"/>
<dbReference type="Proteomes" id="UP000001822">
    <property type="component" value="Chromosome"/>
</dbReference>
<dbReference type="GO" id="GO:0005886">
    <property type="term" value="C:plasma membrane"/>
    <property type="evidence" value="ECO:0007669"/>
    <property type="project" value="UniProtKB-SubCell"/>
</dbReference>
<dbReference type="GO" id="GO:0051287">
    <property type="term" value="F:NAD binding"/>
    <property type="evidence" value="ECO:0007669"/>
    <property type="project" value="InterPro"/>
</dbReference>
<dbReference type="GO" id="GO:0050136">
    <property type="term" value="F:NADH:ubiquinone reductase (non-electrogenic) activity"/>
    <property type="evidence" value="ECO:0007669"/>
    <property type="project" value="UniProtKB-UniRule"/>
</dbReference>
<dbReference type="GO" id="GO:0048038">
    <property type="term" value="F:quinone binding"/>
    <property type="evidence" value="ECO:0007669"/>
    <property type="project" value="UniProtKB-KW"/>
</dbReference>
<dbReference type="Gene3D" id="1.10.645.10">
    <property type="entry name" value="Cytochrome-c3 Hydrogenase, chain B"/>
    <property type="match status" value="1"/>
</dbReference>
<dbReference type="HAMAP" id="MF_01358">
    <property type="entry name" value="NDH1_NuoD"/>
    <property type="match status" value="1"/>
</dbReference>
<dbReference type="InterPro" id="IPR001135">
    <property type="entry name" value="NADH_Q_OxRdtase_suD"/>
</dbReference>
<dbReference type="InterPro" id="IPR014029">
    <property type="entry name" value="NADH_UbQ_OxRdtase_49kDa_CS"/>
</dbReference>
<dbReference type="InterPro" id="IPR022885">
    <property type="entry name" value="NDH1_su_D/H"/>
</dbReference>
<dbReference type="InterPro" id="IPR029014">
    <property type="entry name" value="NiFe-Hase_large"/>
</dbReference>
<dbReference type="NCBIfam" id="NF004739">
    <property type="entry name" value="PRK06075.1"/>
    <property type="match status" value="1"/>
</dbReference>
<dbReference type="PANTHER" id="PTHR11993:SF10">
    <property type="entry name" value="NADH DEHYDROGENASE [UBIQUINONE] IRON-SULFUR PROTEIN 2, MITOCHONDRIAL"/>
    <property type="match status" value="1"/>
</dbReference>
<dbReference type="PANTHER" id="PTHR11993">
    <property type="entry name" value="NADH-UBIQUINONE OXIDOREDUCTASE 49 KDA SUBUNIT"/>
    <property type="match status" value="1"/>
</dbReference>
<dbReference type="Pfam" id="PF00346">
    <property type="entry name" value="Complex1_49kDa"/>
    <property type="match status" value="1"/>
</dbReference>
<dbReference type="SUPFAM" id="SSF56762">
    <property type="entry name" value="HydB/Nqo4-like"/>
    <property type="match status" value="1"/>
</dbReference>
<dbReference type="PROSITE" id="PS00535">
    <property type="entry name" value="COMPLEX1_49K"/>
    <property type="match status" value="1"/>
</dbReference>
<protein>
    <recommendedName>
        <fullName evidence="1">NADH-quinone oxidoreductase subunit D 2</fullName>
        <ecNumber evidence="1">7.1.1.-</ecNumber>
    </recommendedName>
    <alternativeName>
        <fullName evidence="1">NADH dehydrogenase I subunit D 2</fullName>
    </alternativeName>
    <alternativeName>
        <fullName evidence="1">NDH-1 subunit D 2</fullName>
    </alternativeName>
</protein>
<proteinExistence type="inferred from homology"/>
<comment type="function">
    <text evidence="1">NDH-1 shuttles electrons from NADH, via FMN and iron-sulfur (Fe-S) centers, to quinones in the respiratory chain. The immediate electron acceptor for the enzyme in this species is believed to be a menaquinone. Couples the redox reaction to proton translocation (for every two electrons transferred, four hydrogen ions are translocated across the cytoplasmic membrane), and thus conserves the redox energy in a proton gradient.</text>
</comment>
<comment type="catalytic activity">
    <reaction evidence="1">
        <text>a quinone + NADH + 5 H(+)(in) = a quinol + NAD(+) + 4 H(+)(out)</text>
        <dbReference type="Rhea" id="RHEA:57888"/>
        <dbReference type="ChEBI" id="CHEBI:15378"/>
        <dbReference type="ChEBI" id="CHEBI:24646"/>
        <dbReference type="ChEBI" id="CHEBI:57540"/>
        <dbReference type="ChEBI" id="CHEBI:57945"/>
        <dbReference type="ChEBI" id="CHEBI:132124"/>
    </reaction>
</comment>
<comment type="subunit">
    <text evidence="1">NDH-1 is composed of 14 different subunits. Subunits NuoB, C, D, E, F, and G constitute the peripheral sector of the complex.</text>
</comment>
<comment type="subcellular location">
    <subcellularLocation>
        <location evidence="1">Cell inner membrane</location>
        <topology evidence="1">Peripheral membrane protein</topology>
        <orientation evidence="1">Cytoplasmic side</orientation>
    </subcellularLocation>
</comment>
<comment type="similarity">
    <text evidence="1">Belongs to the complex I 49 kDa subunit family.</text>
</comment>
<organism>
    <name type="scientific">Cytophaga hutchinsonii (strain ATCC 33406 / DSM 1761 / CIP 103989 / NBRC 15051 / NCIMB 9469 / D465)</name>
    <dbReference type="NCBI Taxonomy" id="269798"/>
    <lineage>
        <taxon>Bacteria</taxon>
        <taxon>Pseudomonadati</taxon>
        <taxon>Bacteroidota</taxon>
        <taxon>Cytophagia</taxon>
        <taxon>Cytophagales</taxon>
        <taxon>Cytophagaceae</taxon>
        <taxon>Cytophaga</taxon>
    </lineage>
</organism>
<name>NUOD2_CYTH3</name>
<keyword id="KW-0997">Cell inner membrane</keyword>
<keyword id="KW-1003">Cell membrane</keyword>
<keyword id="KW-0472">Membrane</keyword>
<keyword id="KW-0520">NAD</keyword>
<keyword id="KW-0874">Quinone</keyword>
<keyword id="KW-1185">Reference proteome</keyword>
<keyword id="KW-1278">Translocase</keyword>
<keyword id="KW-0813">Transport</keyword>
<reference key="1">
    <citation type="journal article" date="2007" name="Appl. Environ. Microbiol.">
        <title>Genome sequence of the cellulolytic gliding bacterium Cytophaga hutchinsonii.</title>
        <authorList>
            <person name="Xie G."/>
            <person name="Bruce D.C."/>
            <person name="Challacombe J.F."/>
            <person name="Chertkov O."/>
            <person name="Detter J.C."/>
            <person name="Gilna P."/>
            <person name="Han C.S."/>
            <person name="Lucas S."/>
            <person name="Misra M."/>
            <person name="Myers G.L."/>
            <person name="Richardson P."/>
            <person name="Tapia R."/>
            <person name="Thayer N."/>
            <person name="Thompson L.S."/>
            <person name="Brettin T.S."/>
            <person name="Henrissat B."/>
            <person name="Wilson D.B."/>
            <person name="McBride M.J."/>
        </authorList>
    </citation>
    <scope>NUCLEOTIDE SEQUENCE [LARGE SCALE GENOMIC DNA]</scope>
    <source>
        <strain>ATCC 33406 / DSM 1761 / JCM 20678 / CIP 103989 / IAM 12607 / NBRC 15051 / NCIMB 9469 / D465</strain>
    </source>
</reference>
<accession>Q11VB5</accession>
<sequence length="393" mass="44839">MDNDHLTTLNLGPTHPATHGVFQNILKMDGERIVDAVPTVGYIHRAFEKIAERRAFYQITTLTDRMNYCSAPLNNMGWHMTVEKLAGIELPKRVEYMRVVIMELSRIADHLICNSILGVDAGAFTGFLYIMQSREQIYEIFEEICGARLTTNMGRIGGFERDFNDIAMRKIDKFLADYPAVLTEFENLFNRNRIFMDRTIGTGGITAERALNYGFTGPNLRAAGVDYDVRVTSPYSSYQDFDFTIPIGINGDTYDRFMVRNKEMWESLSIIRQAMEKIKALPKGVFHAEVPDFYLPPKEDVYSQMEALIYHFKIVMGETEIPKGEVYHSIEGANGELGYYLVSDGGRTPYRLHFRRPCFIYYQAYPEMIKGQLISDAVVTMSSLNLIAGEMDA</sequence>